<evidence type="ECO:0000256" key="1">
    <source>
        <dbReference type="SAM" id="MobiDB-lite"/>
    </source>
</evidence>
<evidence type="ECO:0000305" key="2"/>
<organismHost>
    <name type="scientific">Antilocapra americana</name>
    <name type="common">Pronghorn</name>
    <dbReference type="NCBI Taxonomy" id="9891"/>
</organismHost>
<organismHost>
    <name type="scientific">Bos taurus</name>
    <name type="common">Bovine</name>
    <dbReference type="NCBI Taxonomy" id="9913"/>
</organismHost>
<organismHost>
    <name type="scientific">Capra hircus</name>
    <name type="common">Goat</name>
    <dbReference type="NCBI Taxonomy" id="9925"/>
</organismHost>
<organismHost>
    <name type="scientific">Culicoides variipennis</name>
    <name type="common">Biting midge</name>
    <dbReference type="NCBI Taxonomy" id="46212"/>
</organismHost>
<organismHost>
    <name type="scientific">Ovis aries</name>
    <name type="common">Sheep</name>
    <dbReference type="NCBI Taxonomy" id="9940"/>
</organismHost>
<keyword id="KW-0694">RNA-binding</keyword>
<reference key="1">
    <citation type="journal article" date="1989" name="Nucleic Acids Res.">
        <title>Complete nucleotide sequence of gene segment 8 encoding non-structural protein NS2 of SA bluetongue virus serotype 10.</title>
        <authorList>
            <person name="Hall S.J."/>
            <person name="van Dijk A.A."/>
            <person name="Huismans H."/>
        </authorList>
    </citation>
    <scope>NUCLEOTIDE SEQUENCE [GENOMIC RNA]</scope>
</reference>
<sequence length="357" mass="41150">MEQKQRRFTKNIFVLDANAKTLCGRIAKLSSQPYCQIKIGRVIAFKPVKNPEPKGYVLNVPGPGAYRIQDGQDIISLMLTPHGVEATTERWEEWKFEGVSVTPMATRVQHNGVMVDAEIKYCKGMGIVQPYMRNDFDRNEMPDLPGVMRSNYDIRELRQKIKNERESAPRLQVQSVAPREESRWMDDDEAKVDEEAREMIPGTSRLEKLREARSNVFKEVAAGINWNLDEKDEEDGDEREDEERVKTLSDDDEQGEDASDDEHPKTHITKEYVEKVAKQIKLKDERFMSLSSAMPQASGGFDRMIVTKKLKWQNVPLYCFDESSKRYELQCVGACERVAFVSKDMSLIILRSAFRRL</sequence>
<name>VNS2_BTV1X</name>
<protein>
    <recommendedName>
        <fullName>Non-structural protein NS2</fullName>
    </recommendedName>
</protein>
<organism>
    <name type="scientific">Bluetongue virus 10</name>
    <name type="common">BTV 10</name>
    <dbReference type="NCBI Taxonomy" id="10906"/>
    <lineage>
        <taxon>Viruses</taxon>
        <taxon>Riboviria</taxon>
        <taxon>Orthornavirae</taxon>
        <taxon>Duplornaviricota</taxon>
        <taxon>Resentoviricetes</taxon>
        <taxon>Reovirales</taxon>
        <taxon>Sedoreoviridae</taxon>
        <taxon>Orbivirus</taxon>
        <taxon>Bluetongue virus</taxon>
    </lineage>
</organism>
<feature type="chain" id="PRO_0000222676" description="Non-structural protein NS2">
    <location>
        <begin position="1"/>
        <end position="357"/>
    </location>
</feature>
<feature type="region of interest" description="Disordered" evidence="1">
    <location>
        <begin position="163"/>
        <end position="199"/>
    </location>
</feature>
<feature type="region of interest" description="Disordered" evidence="1">
    <location>
        <begin position="228"/>
        <end position="267"/>
    </location>
</feature>
<feature type="compositionally biased region" description="Acidic residues" evidence="1">
    <location>
        <begin position="230"/>
        <end position="241"/>
    </location>
</feature>
<feature type="compositionally biased region" description="Acidic residues" evidence="1">
    <location>
        <begin position="250"/>
        <end position="260"/>
    </location>
</feature>
<proteinExistence type="inferred from homology"/>
<comment type="function">
    <text>Single-stranded RNA-binding protein.</text>
</comment>
<comment type="similarity">
    <text evidence="2">Belongs to the orbivirus non-structural protein NS2 family.</text>
</comment>
<dbReference type="EMBL" id="X13374">
    <property type="protein sequence ID" value="CAA31749.1"/>
    <property type="molecule type" value="Genomic_RNA"/>
</dbReference>
<dbReference type="PIR" id="S02112">
    <property type="entry name" value="MNXRS2"/>
</dbReference>
<dbReference type="SMR" id="P10350"/>
<dbReference type="GO" id="GO:0003723">
    <property type="term" value="F:RNA binding"/>
    <property type="evidence" value="ECO:0007669"/>
    <property type="project" value="UniProtKB-KW"/>
</dbReference>
<dbReference type="InterPro" id="IPR007602">
    <property type="entry name" value="BTV_NS2"/>
</dbReference>
<dbReference type="InterPro" id="IPR037194">
    <property type="entry name" value="NS2_N"/>
</dbReference>
<dbReference type="Pfam" id="PF04514">
    <property type="entry name" value="BTV_NS2"/>
    <property type="match status" value="1"/>
</dbReference>
<dbReference type="SUPFAM" id="SSF110132">
    <property type="entry name" value="BTV NS2-like ssRNA-binding domain"/>
    <property type="match status" value="1"/>
</dbReference>
<gene>
    <name type="primary">Segment-8</name>
</gene>
<accession>P10350</accession>